<name>ILVD_METST</name>
<feature type="chain" id="PRO_1000001011" description="Dihydroxy-acid dehydratase">
    <location>
        <begin position="1"/>
        <end position="549"/>
    </location>
</feature>
<feature type="active site" description="Proton acceptor" evidence="1">
    <location>
        <position position="466"/>
    </location>
</feature>
<feature type="binding site" evidence="1">
    <location>
        <position position="78"/>
    </location>
    <ligand>
        <name>Mg(2+)</name>
        <dbReference type="ChEBI" id="CHEBI:18420"/>
    </ligand>
</feature>
<feature type="binding site" evidence="1">
    <location>
        <position position="119"/>
    </location>
    <ligand>
        <name>[2Fe-2S] cluster</name>
        <dbReference type="ChEBI" id="CHEBI:190135"/>
    </ligand>
</feature>
<feature type="binding site" evidence="1">
    <location>
        <position position="120"/>
    </location>
    <ligand>
        <name>Mg(2+)</name>
        <dbReference type="ChEBI" id="CHEBI:18420"/>
    </ligand>
</feature>
<feature type="binding site" description="via carbamate group" evidence="1">
    <location>
        <position position="121"/>
    </location>
    <ligand>
        <name>Mg(2+)</name>
        <dbReference type="ChEBI" id="CHEBI:18420"/>
    </ligand>
</feature>
<feature type="binding site" evidence="1">
    <location>
        <position position="191"/>
    </location>
    <ligand>
        <name>[2Fe-2S] cluster</name>
        <dbReference type="ChEBI" id="CHEBI:190135"/>
    </ligand>
</feature>
<feature type="binding site" evidence="1">
    <location>
        <position position="441"/>
    </location>
    <ligand>
        <name>Mg(2+)</name>
        <dbReference type="ChEBI" id="CHEBI:18420"/>
    </ligand>
</feature>
<feature type="modified residue" description="N6-carboxylysine" evidence="1">
    <location>
        <position position="121"/>
    </location>
</feature>
<evidence type="ECO:0000255" key="1">
    <source>
        <dbReference type="HAMAP-Rule" id="MF_00012"/>
    </source>
</evidence>
<proteinExistence type="inferred from homology"/>
<gene>
    <name evidence="1" type="primary">ilvD</name>
    <name type="ordered locus">Msp_1576</name>
</gene>
<organism>
    <name type="scientific">Methanosphaera stadtmanae (strain ATCC 43021 / DSM 3091 / JCM 11832 / MCB-3)</name>
    <dbReference type="NCBI Taxonomy" id="339860"/>
    <lineage>
        <taxon>Archaea</taxon>
        <taxon>Methanobacteriati</taxon>
        <taxon>Methanobacteriota</taxon>
        <taxon>Methanomada group</taxon>
        <taxon>Methanobacteria</taxon>
        <taxon>Methanobacteriales</taxon>
        <taxon>Methanobacteriaceae</taxon>
        <taxon>Methanosphaera</taxon>
    </lineage>
</organism>
<comment type="function">
    <text evidence="1">Functions in the biosynthesis of branched-chain amino acids. Catalyzes the dehydration of (2R,3R)-2,3-dihydroxy-3-methylpentanoate (2,3-dihydroxy-3-methylvalerate) into 2-oxo-3-methylpentanoate (2-oxo-3-methylvalerate) and of (2R)-2,3-dihydroxy-3-methylbutanoate (2,3-dihydroxyisovalerate) into 2-oxo-3-methylbutanoate (2-oxoisovalerate), the penultimate precursor to L-isoleucine and L-valine, respectively.</text>
</comment>
<comment type="catalytic activity">
    <reaction evidence="1">
        <text>(2R)-2,3-dihydroxy-3-methylbutanoate = 3-methyl-2-oxobutanoate + H2O</text>
        <dbReference type="Rhea" id="RHEA:24809"/>
        <dbReference type="ChEBI" id="CHEBI:11851"/>
        <dbReference type="ChEBI" id="CHEBI:15377"/>
        <dbReference type="ChEBI" id="CHEBI:49072"/>
        <dbReference type="EC" id="4.2.1.9"/>
    </reaction>
    <physiologicalReaction direction="left-to-right" evidence="1">
        <dbReference type="Rhea" id="RHEA:24810"/>
    </physiologicalReaction>
</comment>
<comment type="catalytic activity">
    <reaction evidence="1">
        <text>(2R,3R)-2,3-dihydroxy-3-methylpentanoate = (S)-3-methyl-2-oxopentanoate + H2O</text>
        <dbReference type="Rhea" id="RHEA:27694"/>
        <dbReference type="ChEBI" id="CHEBI:15377"/>
        <dbReference type="ChEBI" id="CHEBI:35146"/>
        <dbReference type="ChEBI" id="CHEBI:49258"/>
        <dbReference type="EC" id="4.2.1.9"/>
    </reaction>
    <physiologicalReaction direction="left-to-right" evidence="1">
        <dbReference type="Rhea" id="RHEA:27695"/>
    </physiologicalReaction>
</comment>
<comment type="cofactor">
    <cofactor evidence="1">
        <name>[2Fe-2S] cluster</name>
        <dbReference type="ChEBI" id="CHEBI:190135"/>
    </cofactor>
    <text evidence="1">Binds 1 [2Fe-2S] cluster per subunit. This cluster acts as a Lewis acid cofactor.</text>
</comment>
<comment type="cofactor">
    <cofactor evidence="1">
        <name>Mg(2+)</name>
        <dbReference type="ChEBI" id="CHEBI:18420"/>
    </cofactor>
</comment>
<comment type="pathway">
    <text evidence="1">Amino-acid biosynthesis; L-isoleucine biosynthesis; L-isoleucine from 2-oxobutanoate: step 3/4.</text>
</comment>
<comment type="pathway">
    <text evidence="1">Amino-acid biosynthesis; L-valine biosynthesis; L-valine from pyruvate: step 3/4.</text>
</comment>
<comment type="subunit">
    <text evidence="1">Homodimer.</text>
</comment>
<comment type="similarity">
    <text evidence="1">Belongs to the IlvD/Edd family.</text>
</comment>
<sequence>MRSDNIKKGINRTSHRSLLRACGLDDNDMKKPFIGIANSYTDIVPGHIHLKDLVQEVKEVIRLEGGVPFEFDTMAVCDGIAMNHEGMYYSLPSREIIANTVESMAMAHQFDALILMPTCDKVVPGMIMAAARLNIPAIVITGGPMMPGKFHGETVDFINVTEAVGATQSGKMSEEDLYELERCACPGAGSCAGLFTANTMACLTETMGMSLPGCATAHAVSDKKVEIARASAKKIFTLLENDIKPSDILTQEAFENAIKVDLALGGSTNTTLHIPAIANEVDGVDVTIDLFDKLSHEVPYICSIRPGGNNRMIDVENAGGIPAVMKNMESILNTDCITCTSNSVKENLEKVSDIDYNVIHTLDDPIRTEGGIAVLYGNVAPNGCVIKQGAVNEDMLVHSGPCKVFNSEEECVLAIENDEIIDGDVVVIRYEGPKGGPGMREMLNPTAAIMGRELFHVALITDGRFSGGSRGPCIGHISPEAAEGGPIGAIENGDIVSINVKERTIKLELTDDEIKERLSKVKPVERNLKGWLKQYQKLATSADKGAILK</sequence>
<accession>Q2NE10</accession>
<reference key="1">
    <citation type="journal article" date="2006" name="J. Bacteriol.">
        <title>The genome sequence of Methanosphaera stadtmanae reveals why this human intestinal archaeon is restricted to methanol and H2 for methane formation and ATP synthesis.</title>
        <authorList>
            <person name="Fricke W.F."/>
            <person name="Seedorf H."/>
            <person name="Henne A."/>
            <person name="Kruer M."/>
            <person name="Liesegang H."/>
            <person name="Hedderich R."/>
            <person name="Gottschalk G."/>
            <person name="Thauer R.K."/>
        </authorList>
    </citation>
    <scope>NUCLEOTIDE SEQUENCE [LARGE SCALE GENOMIC DNA]</scope>
    <source>
        <strain>ATCC 43021 / DSM 3091 / JCM 11832 / MCB-3</strain>
    </source>
</reference>
<protein>
    <recommendedName>
        <fullName evidence="1">Dihydroxy-acid dehydratase</fullName>
        <shortName evidence="1">DAD</shortName>
        <ecNumber evidence="1">4.2.1.9</ecNumber>
    </recommendedName>
</protein>
<dbReference type="EC" id="4.2.1.9" evidence="1"/>
<dbReference type="EMBL" id="CP000102">
    <property type="protein sequence ID" value="ABC57943.1"/>
    <property type="molecule type" value="Genomic_DNA"/>
</dbReference>
<dbReference type="RefSeq" id="WP_011407142.1">
    <property type="nucleotide sequence ID" value="NC_007681.1"/>
</dbReference>
<dbReference type="SMR" id="Q2NE10"/>
<dbReference type="STRING" id="339860.Msp_1576"/>
<dbReference type="GeneID" id="41326153"/>
<dbReference type="KEGG" id="mst:Msp_1576"/>
<dbReference type="eggNOG" id="arCOG04045">
    <property type="taxonomic scope" value="Archaea"/>
</dbReference>
<dbReference type="HOGENOM" id="CLU_014271_4_2_2"/>
<dbReference type="OrthoDB" id="8674at2157"/>
<dbReference type="UniPathway" id="UPA00047">
    <property type="reaction ID" value="UER00057"/>
</dbReference>
<dbReference type="UniPathway" id="UPA00049">
    <property type="reaction ID" value="UER00061"/>
</dbReference>
<dbReference type="Proteomes" id="UP000001931">
    <property type="component" value="Chromosome"/>
</dbReference>
<dbReference type="GO" id="GO:0005829">
    <property type="term" value="C:cytosol"/>
    <property type="evidence" value="ECO:0007669"/>
    <property type="project" value="TreeGrafter"/>
</dbReference>
<dbReference type="GO" id="GO:0051537">
    <property type="term" value="F:2 iron, 2 sulfur cluster binding"/>
    <property type="evidence" value="ECO:0007669"/>
    <property type="project" value="UniProtKB-UniRule"/>
</dbReference>
<dbReference type="GO" id="GO:0004160">
    <property type="term" value="F:dihydroxy-acid dehydratase activity"/>
    <property type="evidence" value="ECO:0007669"/>
    <property type="project" value="UniProtKB-UniRule"/>
</dbReference>
<dbReference type="GO" id="GO:0000287">
    <property type="term" value="F:magnesium ion binding"/>
    <property type="evidence" value="ECO:0007669"/>
    <property type="project" value="UniProtKB-UniRule"/>
</dbReference>
<dbReference type="GO" id="GO:0009097">
    <property type="term" value="P:isoleucine biosynthetic process"/>
    <property type="evidence" value="ECO:0007669"/>
    <property type="project" value="UniProtKB-UniRule"/>
</dbReference>
<dbReference type="GO" id="GO:0009099">
    <property type="term" value="P:L-valine biosynthetic process"/>
    <property type="evidence" value="ECO:0007669"/>
    <property type="project" value="UniProtKB-UniRule"/>
</dbReference>
<dbReference type="FunFam" id="3.50.30.80:FF:000001">
    <property type="entry name" value="Dihydroxy-acid dehydratase"/>
    <property type="match status" value="1"/>
</dbReference>
<dbReference type="Gene3D" id="3.50.30.80">
    <property type="entry name" value="IlvD/EDD C-terminal domain-like"/>
    <property type="match status" value="1"/>
</dbReference>
<dbReference type="HAMAP" id="MF_00012">
    <property type="entry name" value="IlvD"/>
    <property type="match status" value="1"/>
</dbReference>
<dbReference type="InterPro" id="IPR042096">
    <property type="entry name" value="Dihydro-acid_dehy_C"/>
</dbReference>
<dbReference type="InterPro" id="IPR004404">
    <property type="entry name" value="DihydroxyA_deHydtase"/>
</dbReference>
<dbReference type="InterPro" id="IPR020558">
    <property type="entry name" value="DiOHA_6PGluconate_deHydtase_CS"/>
</dbReference>
<dbReference type="InterPro" id="IPR056740">
    <property type="entry name" value="ILV_EDD_C"/>
</dbReference>
<dbReference type="InterPro" id="IPR000581">
    <property type="entry name" value="ILV_EDD_N"/>
</dbReference>
<dbReference type="InterPro" id="IPR037237">
    <property type="entry name" value="IlvD/EDD_N"/>
</dbReference>
<dbReference type="NCBIfam" id="TIGR00110">
    <property type="entry name" value="ilvD"/>
    <property type="match status" value="1"/>
</dbReference>
<dbReference type="NCBIfam" id="NF002068">
    <property type="entry name" value="PRK00911.1"/>
    <property type="match status" value="1"/>
</dbReference>
<dbReference type="PANTHER" id="PTHR43661">
    <property type="entry name" value="D-XYLONATE DEHYDRATASE"/>
    <property type="match status" value="1"/>
</dbReference>
<dbReference type="PANTHER" id="PTHR43661:SF3">
    <property type="entry name" value="D-XYLONATE DEHYDRATASE YAGF-RELATED"/>
    <property type="match status" value="1"/>
</dbReference>
<dbReference type="Pfam" id="PF24877">
    <property type="entry name" value="ILV_EDD_C"/>
    <property type="match status" value="1"/>
</dbReference>
<dbReference type="Pfam" id="PF00920">
    <property type="entry name" value="ILVD_EDD_N"/>
    <property type="match status" value="1"/>
</dbReference>
<dbReference type="SUPFAM" id="SSF143975">
    <property type="entry name" value="IlvD/EDD N-terminal domain-like"/>
    <property type="match status" value="1"/>
</dbReference>
<dbReference type="SUPFAM" id="SSF52016">
    <property type="entry name" value="LeuD/IlvD-like"/>
    <property type="match status" value="1"/>
</dbReference>
<dbReference type="PROSITE" id="PS00886">
    <property type="entry name" value="ILVD_EDD_1"/>
    <property type="match status" value="1"/>
</dbReference>
<dbReference type="PROSITE" id="PS00887">
    <property type="entry name" value="ILVD_EDD_2"/>
    <property type="match status" value="1"/>
</dbReference>
<keyword id="KW-0001">2Fe-2S</keyword>
<keyword id="KW-0028">Amino-acid biosynthesis</keyword>
<keyword id="KW-0100">Branched-chain amino acid biosynthesis</keyword>
<keyword id="KW-0408">Iron</keyword>
<keyword id="KW-0411">Iron-sulfur</keyword>
<keyword id="KW-0456">Lyase</keyword>
<keyword id="KW-0460">Magnesium</keyword>
<keyword id="KW-0479">Metal-binding</keyword>
<keyword id="KW-1185">Reference proteome</keyword>